<feature type="chain" id="PRO_0000170575" description="Guanylate kinase">
    <location>
        <begin position="1"/>
        <end position="193"/>
    </location>
</feature>
<feature type="domain" description="Guanylate kinase-like" evidence="1">
    <location>
        <begin position="8"/>
        <end position="188"/>
    </location>
</feature>
<feature type="binding site" evidence="1">
    <location>
        <begin position="15"/>
        <end position="22"/>
    </location>
    <ligand>
        <name>ATP</name>
        <dbReference type="ChEBI" id="CHEBI:30616"/>
    </ligand>
</feature>
<accession>Q5YTM7</accession>
<name>KGUA_NOCFA</name>
<proteinExistence type="inferred from homology"/>
<organism>
    <name type="scientific">Nocardia farcinica (strain IFM 10152)</name>
    <dbReference type="NCBI Taxonomy" id="247156"/>
    <lineage>
        <taxon>Bacteria</taxon>
        <taxon>Bacillati</taxon>
        <taxon>Actinomycetota</taxon>
        <taxon>Actinomycetes</taxon>
        <taxon>Mycobacteriales</taxon>
        <taxon>Nocardiaceae</taxon>
        <taxon>Nocardia</taxon>
    </lineage>
</organism>
<sequence>MVEHTRKGRLVVLVGPSAVGKSTVVRCVRERLPELVFSVSATTRAPRPGEVDGRDYRFVTRAEFDAMIEAGELLEWAEIHGGLQRSGTPAAPVREALAAGKNVLLEVDLEGARSVRKVMPEARLVFLAPPSWDELVARLTARGTETPEVIARRLETARIELAACDEFDNVIVNDEVTSACEQLVSLFVSTNSR</sequence>
<protein>
    <recommendedName>
        <fullName evidence="1">Guanylate kinase</fullName>
        <ecNumber evidence="1">2.7.4.8</ecNumber>
    </recommendedName>
    <alternativeName>
        <fullName evidence="1">GMP kinase</fullName>
    </alternativeName>
</protein>
<gene>
    <name evidence="1" type="primary">gmk</name>
    <name type="ordered locus">NFA_36160</name>
</gene>
<comment type="function">
    <text evidence="1">Essential for recycling GMP and indirectly, cGMP.</text>
</comment>
<comment type="catalytic activity">
    <reaction evidence="1">
        <text>GMP + ATP = GDP + ADP</text>
        <dbReference type="Rhea" id="RHEA:20780"/>
        <dbReference type="ChEBI" id="CHEBI:30616"/>
        <dbReference type="ChEBI" id="CHEBI:58115"/>
        <dbReference type="ChEBI" id="CHEBI:58189"/>
        <dbReference type="ChEBI" id="CHEBI:456216"/>
        <dbReference type="EC" id="2.7.4.8"/>
    </reaction>
</comment>
<comment type="subcellular location">
    <subcellularLocation>
        <location evidence="1">Cytoplasm</location>
    </subcellularLocation>
</comment>
<comment type="similarity">
    <text evidence="1">Belongs to the guanylate kinase family.</text>
</comment>
<keyword id="KW-0067">ATP-binding</keyword>
<keyword id="KW-0963">Cytoplasm</keyword>
<keyword id="KW-0418">Kinase</keyword>
<keyword id="KW-0547">Nucleotide-binding</keyword>
<keyword id="KW-1185">Reference proteome</keyword>
<keyword id="KW-0808">Transferase</keyword>
<evidence type="ECO:0000255" key="1">
    <source>
        <dbReference type="HAMAP-Rule" id="MF_00328"/>
    </source>
</evidence>
<dbReference type="EC" id="2.7.4.8" evidence="1"/>
<dbReference type="EMBL" id="AP006618">
    <property type="protein sequence ID" value="BAD58464.1"/>
    <property type="molecule type" value="Genomic_DNA"/>
</dbReference>
<dbReference type="RefSeq" id="WP_011210149.1">
    <property type="nucleotide sequence ID" value="NC_006361.1"/>
</dbReference>
<dbReference type="SMR" id="Q5YTM7"/>
<dbReference type="STRING" id="247156.NFA_36160"/>
<dbReference type="GeneID" id="61134312"/>
<dbReference type="KEGG" id="nfa:NFA_36160"/>
<dbReference type="eggNOG" id="COG0194">
    <property type="taxonomic scope" value="Bacteria"/>
</dbReference>
<dbReference type="HOGENOM" id="CLU_001715_1_1_11"/>
<dbReference type="OrthoDB" id="9808150at2"/>
<dbReference type="Proteomes" id="UP000006820">
    <property type="component" value="Chromosome"/>
</dbReference>
<dbReference type="GO" id="GO:0005829">
    <property type="term" value="C:cytosol"/>
    <property type="evidence" value="ECO:0007669"/>
    <property type="project" value="TreeGrafter"/>
</dbReference>
<dbReference type="GO" id="GO:0005524">
    <property type="term" value="F:ATP binding"/>
    <property type="evidence" value="ECO:0007669"/>
    <property type="project" value="UniProtKB-UniRule"/>
</dbReference>
<dbReference type="GO" id="GO:0004385">
    <property type="term" value="F:guanylate kinase activity"/>
    <property type="evidence" value="ECO:0007669"/>
    <property type="project" value="UniProtKB-UniRule"/>
</dbReference>
<dbReference type="CDD" id="cd00071">
    <property type="entry name" value="GMPK"/>
    <property type="match status" value="1"/>
</dbReference>
<dbReference type="FunFam" id="3.30.63.10:FF:000002">
    <property type="entry name" value="Guanylate kinase 1"/>
    <property type="match status" value="1"/>
</dbReference>
<dbReference type="Gene3D" id="3.30.63.10">
    <property type="entry name" value="Guanylate Kinase phosphate binding domain"/>
    <property type="match status" value="1"/>
</dbReference>
<dbReference type="Gene3D" id="3.40.50.300">
    <property type="entry name" value="P-loop containing nucleotide triphosphate hydrolases"/>
    <property type="match status" value="1"/>
</dbReference>
<dbReference type="HAMAP" id="MF_00328">
    <property type="entry name" value="Guanylate_kinase"/>
    <property type="match status" value="1"/>
</dbReference>
<dbReference type="InterPro" id="IPR008145">
    <property type="entry name" value="GK/Ca_channel_bsu"/>
</dbReference>
<dbReference type="InterPro" id="IPR008144">
    <property type="entry name" value="Guanylate_kin-like_dom"/>
</dbReference>
<dbReference type="InterPro" id="IPR017665">
    <property type="entry name" value="Guanylate_kinase"/>
</dbReference>
<dbReference type="InterPro" id="IPR020590">
    <property type="entry name" value="Guanylate_kinase_CS"/>
</dbReference>
<dbReference type="InterPro" id="IPR027417">
    <property type="entry name" value="P-loop_NTPase"/>
</dbReference>
<dbReference type="NCBIfam" id="TIGR03263">
    <property type="entry name" value="guanyl_kin"/>
    <property type="match status" value="1"/>
</dbReference>
<dbReference type="PANTHER" id="PTHR23117:SF13">
    <property type="entry name" value="GUANYLATE KINASE"/>
    <property type="match status" value="1"/>
</dbReference>
<dbReference type="PANTHER" id="PTHR23117">
    <property type="entry name" value="GUANYLATE KINASE-RELATED"/>
    <property type="match status" value="1"/>
</dbReference>
<dbReference type="Pfam" id="PF00625">
    <property type="entry name" value="Guanylate_kin"/>
    <property type="match status" value="1"/>
</dbReference>
<dbReference type="SMART" id="SM00072">
    <property type="entry name" value="GuKc"/>
    <property type="match status" value="1"/>
</dbReference>
<dbReference type="SUPFAM" id="SSF52540">
    <property type="entry name" value="P-loop containing nucleoside triphosphate hydrolases"/>
    <property type="match status" value="1"/>
</dbReference>
<dbReference type="PROSITE" id="PS00856">
    <property type="entry name" value="GUANYLATE_KINASE_1"/>
    <property type="match status" value="1"/>
</dbReference>
<dbReference type="PROSITE" id="PS50052">
    <property type="entry name" value="GUANYLATE_KINASE_2"/>
    <property type="match status" value="1"/>
</dbReference>
<reference key="1">
    <citation type="journal article" date="2004" name="Proc. Natl. Acad. Sci. U.S.A.">
        <title>The complete genomic sequence of Nocardia farcinica IFM 10152.</title>
        <authorList>
            <person name="Ishikawa J."/>
            <person name="Yamashita A."/>
            <person name="Mikami Y."/>
            <person name="Hoshino Y."/>
            <person name="Kurita H."/>
            <person name="Hotta K."/>
            <person name="Shiba T."/>
            <person name="Hattori M."/>
        </authorList>
    </citation>
    <scope>NUCLEOTIDE SEQUENCE [LARGE SCALE GENOMIC DNA]</scope>
    <source>
        <strain>IFM 10152</strain>
    </source>
</reference>